<gene>
    <name type="primary">istA</name>
</gene>
<proteinExistence type="inferred from homology"/>
<geneLocation type="plasmid">
    <name>R68.45</name>
</geneLocation>
<sequence length="390" mass="45983">MLSREDFYMIKQMRQQGAYIVDIATQIGCSERTVRRYLKYPEPPARKTRHKMVKLKPFMDYIDMRLAENVWNSEVIFAEIKAMGYTGGRSMLRYYIQPKRKMRPSKRTVRFETQPRYQLQHDWGEVEVEVAGQRCKVNFAVNTLGFSRRFHVFAAPKQDAEHTYESLVRAFRYFGGCVKTVLVDNQKAAVLKNNNGKVVFNSGFLLLADHYNFLPRACRPRRARTKGKVERMVKYLKENFFVRYRRFDSFTHVNQQLEQWIADVADKRELRQFKETPEQRFALEQEHLQPLPDTDFDTSYFDIRHVSWDSYIEVGGNRYSVPEALCGQPVSIRISLDDELRIYSNEKLVASHRLCSASSGWQTVPEHHAPLWQQVSQVEHRPLSAYEELL</sequence>
<accession>P15025</accession>
<protein>
    <recommendedName>
        <fullName>Transposase for insertion sequence element IS21</fullName>
    </recommendedName>
</protein>
<organism>
    <name type="scientific">Pseudomonas aeruginosa</name>
    <dbReference type="NCBI Taxonomy" id="287"/>
    <lineage>
        <taxon>Bacteria</taxon>
        <taxon>Pseudomonadati</taxon>
        <taxon>Pseudomonadota</taxon>
        <taxon>Gammaproteobacteria</taxon>
        <taxon>Pseudomonadales</taxon>
        <taxon>Pseudomonadaceae</taxon>
        <taxon>Pseudomonas</taxon>
    </lineage>
</organism>
<reference key="1">
    <citation type="journal article" date="1989" name="Mol. Gen. Genet.">
        <title>Genetic structure, function and regulation of the transposable element IS21.</title>
        <authorList>
            <person name="Reimmann C."/>
            <person name="Moore R."/>
            <person name="Little S."/>
            <person name="Savioz A."/>
            <person name="Willetts N.S."/>
            <person name="Haas D."/>
        </authorList>
    </citation>
    <scope>NUCLEOTIDE SEQUENCE [GENOMIC DNA]</scope>
</reference>
<reference key="2">
    <citation type="submission" date="2000-06" db="EMBL/GenBank/DDBJ databases">
        <authorList>
            <person name="Berger B."/>
        </authorList>
    </citation>
    <scope>SEQUENCE REVISION TO 283</scope>
</reference>
<keyword id="KW-0233">DNA recombination</keyword>
<keyword id="KW-0238">DNA-binding</keyword>
<keyword id="KW-0614">Plasmid</keyword>
<keyword id="KW-0814">Transposable element</keyword>
<keyword id="KW-0815">Transposition</keyword>
<dbReference type="EMBL" id="X14793">
    <property type="protein sequence ID" value="CAA32898.2"/>
    <property type="molecule type" value="Genomic_DNA"/>
</dbReference>
<dbReference type="PIR" id="JV0012">
    <property type="entry name" value="BVECIS"/>
</dbReference>
<dbReference type="SMR" id="P15025"/>
<dbReference type="GO" id="GO:0003677">
    <property type="term" value="F:DNA binding"/>
    <property type="evidence" value="ECO:0007669"/>
    <property type="project" value="UniProtKB-KW"/>
</dbReference>
<dbReference type="GO" id="GO:0015074">
    <property type="term" value="P:DNA integration"/>
    <property type="evidence" value="ECO:0007669"/>
    <property type="project" value="InterPro"/>
</dbReference>
<dbReference type="GO" id="GO:0006310">
    <property type="term" value="P:DNA recombination"/>
    <property type="evidence" value="ECO:0007669"/>
    <property type="project" value="UniProtKB-KW"/>
</dbReference>
<dbReference type="GO" id="GO:0032196">
    <property type="term" value="P:transposition"/>
    <property type="evidence" value="ECO:0007669"/>
    <property type="project" value="UniProtKB-KW"/>
</dbReference>
<dbReference type="Gene3D" id="1.10.10.60">
    <property type="entry name" value="Homeodomain-like"/>
    <property type="match status" value="1"/>
</dbReference>
<dbReference type="Gene3D" id="3.30.420.10">
    <property type="entry name" value="Ribonuclease H-like superfamily/Ribonuclease H"/>
    <property type="match status" value="1"/>
</dbReference>
<dbReference type="InterPro" id="IPR017894">
    <property type="entry name" value="HTH_IS21_transposase_type"/>
</dbReference>
<dbReference type="InterPro" id="IPR001584">
    <property type="entry name" value="Integrase_cat-core"/>
</dbReference>
<dbReference type="InterPro" id="IPR054353">
    <property type="entry name" value="IstA-like_C"/>
</dbReference>
<dbReference type="InterPro" id="IPR012337">
    <property type="entry name" value="RNaseH-like_sf"/>
</dbReference>
<dbReference type="InterPro" id="IPR036397">
    <property type="entry name" value="RNaseH_sf"/>
</dbReference>
<dbReference type="NCBIfam" id="NF033546">
    <property type="entry name" value="transpos_IS21"/>
    <property type="match status" value="1"/>
</dbReference>
<dbReference type="PANTHER" id="PTHR35004:SF7">
    <property type="entry name" value="INTEGRASE PROTEIN"/>
    <property type="match status" value="1"/>
</dbReference>
<dbReference type="PANTHER" id="PTHR35004">
    <property type="entry name" value="TRANSPOSASE RV3428C-RELATED"/>
    <property type="match status" value="1"/>
</dbReference>
<dbReference type="Pfam" id="PF22483">
    <property type="entry name" value="Mu-transpos_C_2"/>
    <property type="match status" value="1"/>
</dbReference>
<dbReference type="Pfam" id="PF00665">
    <property type="entry name" value="rve"/>
    <property type="match status" value="1"/>
</dbReference>
<dbReference type="SUPFAM" id="SSF53098">
    <property type="entry name" value="Ribonuclease H-like"/>
    <property type="match status" value="1"/>
</dbReference>
<dbReference type="PROSITE" id="PS50531">
    <property type="entry name" value="HTH_IS21"/>
    <property type="match status" value="1"/>
</dbReference>
<dbReference type="PROSITE" id="PS50994">
    <property type="entry name" value="INTEGRASE"/>
    <property type="match status" value="1"/>
</dbReference>
<comment type="function">
    <text>Involved in the transposition of the insertion sequence.</text>
</comment>
<comment type="similarity">
    <text evidence="3">Belongs to the transposase IS21/IS408/IS1162 family.</text>
</comment>
<evidence type="ECO:0000255" key="1">
    <source>
        <dbReference type="PROSITE-ProRule" id="PRU00457"/>
    </source>
</evidence>
<evidence type="ECO:0000255" key="2">
    <source>
        <dbReference type="PROSITE-ProRule" id="PRU00615"/>
    </source>
</evidence>
<evidence type="ECO:0000305" key="3"/>
<name>ISTA_PSEAI</name>
<feature type="chain" id="PRO_0000075460" description="Transposase for insertion sequence element IS21">
    <location>
        <begin position="1"/>
        <end position="390"/>
    </location>
</feature>
<feature type="domain" description="HTH IS21-type" evidence="2">
    <location>
        <begin position="5"/>
        <end position="66"/>
    </location>
</feature>
<feature type="domain" description="Integrase catalytic" evidence="1">
    <location>
        <begin position="111"/>
        <end position="285"/>
    </location>
</feature>
<feature type="DNA-binding region" description="H-T-H motif" evidence="2">
    <location>
        <begin position="20"/>
        <end position="39"/>
    </location>
</feature>